<evidence type="ECO:0000250" key="1"/>
<evidence type="ECO:0000250" key="2">
    <source>
        <dbReference type="UniProtKB" id="O75390"/>
    </source>
</evidence>
<evidence type="ECO:0000250" key="3">
    <source>
        <dbReference type="UniProtKB" id="P00889"/>
    </source>
</evidence>
<evidence type="ECO:0000255" key="4">
    <source>
        <dbReference type="PROSITE-ProRule" id="PRU10117"/>
    </source>
</evidence>
<evidence type="ECO:0000305" key="5"/>
<accession>Q6S9V5</accession>
<gene>
    <name type="primary">cs</name>
</gene>
<keyword id="KW-0496">Mitochondrion</keyword>
<keyword id="KW-0808">Transferase</keyword>
<keyword id="KW-0809">Transit peptide</keyword>
<keyword id="KW-0816">Tricarboxylic acid cycle</keyword>
<protein>
    <recommendedName>
        <fullName>Citrate synthase, mitochondrial</fullName>
        <ecNumber>2.3.3.1</ecNumber>
    </recommendedName>
    <alternativeName>
        <fullName>Citrate (Si)-synthase</fullName>
    </alternativeName>
</protein>
<reference key="1">
    <citation type="journal article" date="2005" name="Am. J. Physiol.">
        <title>Mitochondrial enzyme content in the muscles of high-performance fish: evolution and variation among fiber types.</title>
        <authorList>
            <person name="Dalziel A.C."/>
            <person name="Moore S.E."/>
            <person name="Moyes C.D."/>
        </authorList>
    </citation>
    <scope>NUCLEOTIDE SEQUENCE [MRNA]</scope>
    <source>
        <tissue>Red muscle</tissue>
    </source>
</reference>
<sequence>MSFLTVSRLAPKLLNSKNATYFLVAARNASASSTNLKDVLADLIPKEQTRIKNFKQQYGKTNIGQITVDMVYGGMRGMKGLVYETSVLDPEEGIRFRGYSIPECQKLLPKAPGGEEPLPEGLFWLLVTGQVPTEEQVNWVSKEWAKRAALPSHVVTMLDNFPTNLHPMSQFSAAITALNSESSFARAYSEGVHKSKYWEFIYEDSMDLIAKLPCIAAKIYRNLYREGSSIGAIDSNLDWSHNFTNMLGYSEPQFTELMRLYLTIHSDHEGGNVSAHTSHLVGSALSDPYLSFSAAMNGLAGPLHGLANQEVLVWLTALQKELGGEVSDERMRDYIWNTLKSGRVVPGYGHAVLRKTDPRYTCQREFALKHLPNDPMFKLVAQLYKIVPNVLLEQGRAKNPWPNVDAHSGVLLQYYGMTEMNYYTVLFGVSRALGVLAQLVWSRALGFPLERPKSMSSDGLMTLVGAKSG</sequence>
<proteinExistence type="evidence at transcript level"/>
<organism>
    <name type="scientific">Kajikia audax</name>
    <name type="common">Striped marlin</name>
    <name type="synonym">Tetrapturus audax</name>
    <dbReference type="NCBI Taxonomy" id="13721"/>
    <lineage>
        <taxon>Eukaryota</taxon>
        <taxon>Metazoa</taxon>
        <taxon>Chordata</taxon>
        <taxon>Craniata</taxon>
        <taxon>Vertebrata</taxon>
        <taxon>Euteleostomi</taxon>
        <taxon>Actinopterygii</taxon>
        <taxon>Neopterygii</taxon>
        <taxon>Teleostei</taxon>
        <taxon>Neoteleostei</taxon>
        <taxon>Acanthomorphata</taxon>
        <taxon>Carangaria</taxon>
        <taxon>Istiophoriformes</taxon>
        <taxon>Kajikia</taxon>
    </lineage>
</organism>
<feature type="transit peptide" description="Mitochondrion" evidence="1">
    <location>
        <begin position="1"/>
        <end position="30"/>
    </location>
</feature>
<feature type="chain" id="PRO_0000253904" description="Citrate synthase, mitochondrial">
    <location>
        <begin position="31"/>
        <end position="469"/>
    </location>
</feature>
<feature type="active site" evidence="4">
    <location>
        <position position="304"/>
    </location>
</feature>
<feature type="active site" evidence="4">
    <location>
        <position position="350"/>
    </location>
</feature>
<feature type="active site" evidence="4">
    <location>
        <position position="405"/>
    </location>
</feature>
<feature type="binding site" description="in chain A" evidence="2">
    <location>
        <position position="359"/>
    </location>
    <ligand>
        <name>oxaloacetate</name>
        <dbReference type="ChEBI" id="CHEBI:16452"/>
        <note>ligand shared between homodimeric partners</note>
    </ligand>
</feature>
<feature type="binding site" description="in chain A" evidence="2">
    <location>
        <position position="431"/>
    </location>
    <ligand>
        <name>oxaloacetate</name>
        <dbReference type="ChEBI" id="CHEBI:16452"/>
        <note>ligand shared between homodimeric partners</note>
    </ligand>
</feature>
<feature type="binding site" description="in chain B" evidence="2">
    <location>
        <position position="451"/>
    </location>
    <ligand>
        <name>oxaloacetate</name>
        <dbReference type="ChEBI" id="CHEBI:16452"/>
        <note>ligand shared between homodimeric partners</note>
    </ligand>
</feature>
<name>CISY_KAJAU</name>
<dbReference type="EC" id="2.3.3.1"/>
<dbReference type="EMBL" id="AY461852">
    <property type="protein sequence ID" value="AAR98862.1"/>
    <property type="molecule type" value="mRNA"/>
</dbReference>
<dbReference type="SMR" id="Q6S9V5"/>
<dbReference type="UniPathway" id="UPA00223">
    <property type="reaction ID" value="UER00717"/>
</dbReference>
<dbReference type="GO" id="GO:0005759">
    <property type="term" value="C:mitochondrial matrix"/>
    <property type="evidence" value="ECO:0000250"/>
    <property type="project" value="UniProtKB"/>
</dbReference>
<dbReference type="GO" id="GO:0004108">
    <property type="term" value="F:citrate (Si)-synthase activity"/>
    <property type="evidence" value="ECO:0000250"/>
    <property type="project" value="UniProtKB"/>
</dbReference>
<dbReference type="GO" id="GO:0042802">
    <property type="term" value="F:identical protein binding"/>
    <property type="evidence" value="ECO:0000250"/>
    <property type="project" value="UniProtKB"/>
</dbReference>
<dbReference type="GO" id="GO:0005975">
    <property type="term" value="P:carbohydrate metabolic process"/>
    <property type="evidence" value="ECO:0000250"/>
    <property type="project" value="UniProtKB"/>
</dbReference>
<dbReference type="GO" id="GO:0006101">
    <property type="term" value="P:citrate metabolic process"/>
    <property type="evidence" value="ECO:0007669"/>
    <property type="project" value="InterPro"/>
</dbReference>
<dbReference type="GO" id="GO:0006099">
    <property type="term" value="P:tricarboxylic acid cycle"/>
    <property type="evidence" value="ECO:0007669"/>
    <property type="project" value="UniProtKB-UniPathway"/>
</dbReference>
<dbReference type="CDD" id="cd06105">
    <property type="entry name" value="ScCit1-2_like"/>
    <property type="match status" value="1"/>
</dbReference>
<dbReference type="FunFam" id="1.10.230.10:FF:000001">
    <property type="entry name" value="Citrate synthase"/>
    <property type="match status" value="1"/>
</dbReference>
<dbReference type="FunFam" id="1.10.580.10:FF:000001">
    <property type="entry name" value="Citrate synthase"/>
    <property type="match status" value="1"/>
</dbReference>
<dbReference type="Gene3D" id="1.10.580.10">
    <property type="entry name" value="Citrate Synthase, domain 1"/>
    <property type="match status" value="1"/>
</dbReference>
<dbReference type="Gene3D" id="1.10.230.10">
    <property type="entry name" value="Cytochrome P450-Terp, domain 2"/>
    <property type="match status" value="1"/>
</dbReference>
<dbReference type="InterPro" id="IPR016142">
    <property type="entry name" value="Citrate_synth-like_lrg_a-sub"/>
</dbReference>
<dbReference type="InterPro" id="IPR016143">
    <property type="entry name" value="Citrate_synth-like_sm_a-sub"/>
</dbReference>
<dbReference type="InterPro" id="IPR002020">
    <property type="entry name" value="Citrate_synthase"/>
</dbReference>
<dbReference type="InterPro" id="IPR019810">
    <property type="entry name" value="Citrate_synthase_AS"/>
</dbReference>
<dbReference type="InterPro" id="IPR010109">
    <property type="entry name" value="Citrate_synthase_euk"/>
</dbReference>
<dbReference type="InterPro" id="IPR036969">
    <property type="entry name" value="Citrate_synthase_sf"/>
</dbReference>
<dbReference type="NCBIfam" id="TIGR01793">
    <property type="entry name" value="cit_synth_euk"/>
    <property type="match status" value="1"/>
</dbReference>
<dbReference type="NCBIfam" id="NF007128">
    <property type="entry name" value="PRK09569.1"/>
    <property type="match status" value="1"/>
</dbReference>
<dbReference type="PANTHER" id="PTHR11739">
    <property type="entry name" value="CITRATE SYNTHASE"/>
    <property type="match status" value="1"/>
</dbReference>
<dbReference type="PANTHER" id="PTHR11739:SF8">
    <property type="entry name" value="CITRATE SYNTHASE, MITOCHONDRIAL"/>
    <property type="match status" value="1"/>
</dbReference>
<dbReference type="Pfam" id="PF00285">
    <property type="entry name" value="Citrate_synt"/>
    <property type="match status" value="1"/>
</dbReference>
<dbReference type="PRINTS" id="PR00143">
    <property type="entry name" value="CITRTSNTHASE"/>
</dbReference>
<dbReference type="SUPFAM" id="SSF48256">
    <property type="entry name" value="Citrate synthase"/>
    <property type="match status" value="1"/>
</dbReference>
<dbReference type="PROSITE" id="PS00480">
    <property type="entry name" value="CITRATE_SYNTHASE"/>
    <property type="match status" value="1"/>
</dbReference>
<comment type="function">
    <text evidence="5">Key enzyme of the Krebs tricarboxylic acid cycle which catalyzes the synthesis of citrate from acetyl coenzyme A and oxaloacetate.</text>
</comment>
<comment type="catalytic activity">
    <reaction evidence="4">
        <text>oxaloacetate + acetyl-CoA + H2O = citrate + CoA + H(+)</text>
        <dbReference type="Rhea" id="RHEA:16845"/>
        <dbReference type="ChEBI" id="CHEBI:15377"/>
        <dbReference type="ChEBI" id="CHEBI:15378"/>
        <dbReference type="ChEBI" id="CHEBI:16452"/>
        <dbReference type="ChEBI" id="CHEBI:16947"/>
        <dbReference type="ChEBI" id="CHEBI:57287"/>
        <dbReference type="ChEBI" id="CHEBI:57288"/>
        <dbReference type="EC" id="2.3.3.1"/>
    </reaction>
</comment>
<comment type="pathway">
    <text>Carbohydrate metabolism; tricarboxylic acid cycle; isocitrate from oxaloacetate: step 1/2.</text>
</comment>
<comment type="subunit">
    <text evidence="2">Homodimer.</text>
</comment>
<comment type="subcellular location">
    <subcellularLocation>
        <location evidence="3">Mitochondrion matrix</location>
    </subcellularLocation>
</comment>
<comment type="miscellaneous">
    <text>Citrate synthase is found in nearly all cells capable of oxidative metabolism.</text>
</comment>
<comment type="similarity">
    <text evidence="5">Belongs to the citrate synthase family.</text>
</comment>